<name>LGT_CHRVO</name>
<sequence>MLIHPQFDPVAIHLGPLAVHWYGLMYLLGFALFLTMGKYRLKNGNDVLTVPQLDDMLMYGAVGVVVGGRLGEVLFYQPGYYFSHPLEIFMVWKGGMSFHGGFLGVLIAVAIYGRKVGRGFWQLTDFVAPLVPLGLAAGRVGNFINGELWGRVASPELPWAMLFPQARMEDIAEAQQSADLMNMLMQYGGLLRHPSQLYEFALEGIVLFGALWIYSAKPRATGKVSALFLIGYGLARFVSEYFRNPDAGIFGKSDVISMGQWLSLPMIVIGVALLVFFGRRKQG</sequence>
<protein>
    <recommendedName>
        <fullName evidence="1">Phosphatidylglycerol--prolipoprotein diacylglyceryl transferase</fullName>
        <ecNumber evidence="1">2.5.1.145</ecNumber>
    </recommendedName>
</protein>
<keyword id="KW-0997">Cell inner membrane</keyword>
<keyword id="KW-1003">Cell membrane</keyword>
<keyword id="KW-0472">Membrane</keyword>
<keyword id="KW-1185">Reference proteome</keyword>
<keyword id="KW-0808">Transferase</keyword>
<keyword id="KW-0812">Transmembrane</keyword>
<keyword id="KW-1133">Transmembrane helix</keyword>
<proteinExistence type="inferred from homology"/>
<organism>
    <name type="scientific">Chromobacterium violaceum (strain ATCC 12472 / DSM 30191 / JCM 1249 / CCUG 213 / NBRC 12614 / NCIMB 9131 / NCTC 9757 / MK)</name>
    <dbReference type="NCBI Taxonomy" id="243365"/>
    <lineage>
        <taxon>Bacteria</taxon>
        <taxon>Pseudomonadati</taxon>
        <taxon>Pseudomonadota</taxon>
        <taxon>Betaproteobacteria</taxon>
        <taxon>Neisseriales</taxon>
        <taxon>Chromobacteriaceae</taxon>
        <taxon>Chromobacterium</taxon>
    </lineage>
</organism>
<feature type="chain" id="PRO_0000172584" description="Phosphatidylglycerol--prolipoprotein diacylglyceryl transferase">
    <location>
        <begin position="1"/>
        <end position="283"/>
    </location>
</feature>
<feature type="transmembrane region" description="Helical" evidence="1">
    <location>
        <begin position="14"/>
        <end position="34"/>
    </location>
</feature>
<feature type="transmembrane region" description="Helical" evidence="1">
    <location>
        <begin position="56"/>
        <end position="76"/>
    </location>
</feature>
<feature type="transmembrane region" description="Helical" evidence="1">
    <location>
        <begin position="88"/>
        <end position="108"/>
    </location>
</feature>
<feature type="transmembrane region" description="Helical" evidence="1">
    <location>
        <begin position="258"/>
        <end position="278"/>
    </location>
</feature>
<feature type="binding site" evidence="1">
    <location>
        <position position="139"/>
    </location>
    <ligand>
        <name>a 1,2-diacyl-sn-glycero-3-phospho-(1'-sn-glycerol)</name>
        <dbReference type="ChEBI" id="CHEBI:64716"/>
    </ligand>
</feature>
<comment type="function">
    <text evidence="1">Catalyzes the transfer of the diacylglyceryl group from phosphatidylglycerol to the sulfhydryl group of the N-terminal cysteine of a prolipoprotein, the first step in the formation of mature lipoproteins.</text>
</comment>
<comment type="catalytic activity">
    <reaction evidence="1">
        <text>L-cysteinyl-[prolipoprotein] + a 1,2-diacyl-sn-glycero-3-phospho-(1'-sn-glycerol) = an S-1,2-diacyl-sn-glyceryl-L-cysteinyl-[prolipoprotein] + sn-glycerol 1-phosphate + H(+)</text>
        <dbReference type="Rhea" id="RHEA:56712"/>
        <dbReference type="Rhea" id="RHEA-COMP:14679"/>
        <dbReference type="Rhea" id="RHEA-COMP:14680"/>
        <dbReference type="ChEBI" id="CHEBI:15378"/>
        <dbReference type="ChEBI" id="CHEBI:29950"/>
        <dbReference type="ChEBI" id="CHEBI:57685"/>
        <dbReference type="ChEBI" id="CHEBI:64716"/>
        <dbReference type="ChEBI" id="CHEBI:140658"/>
        <dbReference type="EC" id="2.5.1.145"/>
    </reaction>
</comment>
<comment type="pathway">
    <text evidence="1">Protein modification; lipoprotein biosynthesis (diacylglyceryl transfer).</text>
</comment>
<comment type="subcellular location">
    <subcellularLocation>
        <location evidence="1">Cell inner membrane</location>
        <topology evidence="1">Multi-pass membrane protein</topology>
    </subcellularLocation>
</comment>
<comment type="similarity">
    <text evidence="1">Belongs to the Lgt family.</text>
</comment>
<evidence type="ECO:0000255" key="1">
    <source>
        <dbReference type="HAMAP-Rule" id="MF_01147"/>
    </source>
</evidence>
<accession>Q7NYJ8</accession>
<dbReference type="EC" id="2.5.1.145" evidence="1"/>
<dbReference type="EMBL" id="AE016825">
    <property type="protein sequence ID" value="AAQ58951.1"/>
    <property type="molecule type" value="Genomic_DNA"/>
</dbReference>
<dbReference type="RefSeq" id="WP_011134830.1">
    <property type="nucleotide sequence ID" value="NC_005085.1"/>
</dbReference>
<dbReference type="SMR" id="Q7NYJ8"/>
<dbReference type="STRING" id="243365.CV_1276"/>
<dbReference type="KEGG" id="cvi:CV_1276"/>
<dbReference type="eggNOG" id="COG0682">
    <property type="taxonomic scope" value="Bacteria"/>
</dbReference>
<dbReference type="HOGENOM" id="CLU_013386_1_0_4"/>
<dbReference type="OrthoDB" id="871140at2"/>
<dbReference type="UniPathway" id="UPA00664"/>
<dbReference type="Proteomes" id="UP000001424">
    <property type="component" value="Chromosome"/>
</dbReference>
<dbReference type="GO" id="GO:0005886">
    <property type="term" value="C:plasma membrane"/>
    <property type="evidence" value="ECO:0007669"/>
    <property type="project" value="UniProtKB-SubCell"/>
</dbReference>
<dbReference type="GO" id="GO:0008961">
    <property type="term" value="F:phosphatidylglycerol-prolipoprotein diacylglyceryl transferase activity"/>
    <property type="evidence" value="ECO:0007669"/>
    <property type="project" value="UniProtKB-UniRule"/>
</dbReference>
<dbReference type="GO" id="GO:0042158">
    <property type="term" value="P:lipoprotein biosynthetic process"/>
    <property type="evidence" value="ECO:0007669"/>
    <property type="project" value="UniProtKB-UniRule"/>
</dbReference>
<dbReference type="HAMAP" id="MF_01147">
    <property type="entry name" value="Lgt"/>
    <property type="match status" value="1"/>
</dbReference>
<dbReference type="InterPro" id="IPR001640">
    <property type="entry name" value="Lgt"/>
</dbReference>
<dbReference type="NCBIfam" id="TIGR00544">
    <property type="entry name" value="lgt"/>
    <property type="match status" value="1"/>
</dbReference>
<dbReference type="PANTHER" id="PTHR30589:SF0">
    <property type="entry name" value="PHOSPHATIDYLGLYCEROL--PROLIPOPROTEIN DIACYLGLYCERYL TRANSFERASE"/>
    <property type="match status" value="1"/>
</dbReference>
<dbReference type="PANTHER" id="PTHR30589">
    <property type="entry name" value="PROLIPOPROTEIN DIACYLGLYCERYL TRANSFERASE"/>
    <property type="match status" value="1"/>
</dbReference>
<dbReference type="Pfam" id="PF01790">
    <property type="entry name" value="LGT"/>
    <property type="match status" value="1"/>
</dbReference>
<dbReference type="PROSITE" id="PS01311">
    <property type="entry name" value="LGT"/>
    <property type="match status" value="1"/>
</dbReference>
<gene>
    <name evidence="1" type="primary">lgt</name>
    <name type="ordered locus">CV_1276</name>
</gene>
<reference key="1">
    <citation type="journal article" date="2003" name="Proc. Natl. Acad. Sci. U.S.A.">
        <title>The complete genome sequence of Chromobacterium violaceum reveals remarkable and exploitable bacterial adaptability.</title>
        <authorList>
            <person name="Vasconcelos A.T.R."/>
            <person name="de Almeida D.F."/>
            <person name="Hungria M."/>
            <person name="Guimaraes C.T."/>
            <person name="Antonio R.V."/>
            <person name="Almeida F.C."/>
            <person name="de Almeida L.G.P."/>
            <person name="de Almeida R."/>
            <person name="Alves-Gomes J.A."/>
            <person name="Andrade E.M."/>
            <person name="Araripe J."/>
            <person name="de Araujo M.F.F."/>
            <person name="Astolfi-Filho S."/>
            <person name="Azevedo V."/>
            <person name="Baptista A.J."/>
            <person name="Bataus L.A.M."/>
            <person name="Batista J.S."/>
            <person name="Belo A."/>
            <person name="van den Berg C."/>
            <person name="Bogo M."/>
            <person name="Bonatto S."/>
            <person name="Bordignon J."/>
            <person name="Brigido M.M."/>
            <person name="Brito C.A."/>
            <person name="Brocchi M."/>
            <person name="Burity H.A."/>
            <person name="Camargo A.A."/>
            <person name="Cardoso D.D.P."/>
            <person name="Carneiro N.P."/>
            <person name="Carraro D.M."/>
            <person name="Carvalho C.M.B."/>
            <person name="Cascardo J.C.M."/>
            <person name="Cavada B.S."/>
            <person name="Chueire L.M.O."/>
            <person name="Creczynski-Pasa T.B."/>
            <person name="Cunha-Junior N.C."/>
            <person name="Fagundes N."/>
            <person name="Falcao C.L."/>
            <person name="Fantinatti F."/>
            <person name="Farias I.P."/>
            <person name="Felipe M.S.S."/>
            <person name="Ferrari L.P."/>
            <person name="Ferro J.A."/>
            <person name="Ferro M.I.T."/>
            <person name="Franco G.R."/>
            <person name="Freitas N.S.A."/>
            <person name="Furlan L.R."/>
            <person name="Gazzinelli R.T."/>
            <person name="Gomes E.A."/>
            <person name="Goncalves P.R."/>
            <person name="Grangeiro T.B."/>
            <person name="Grattapaglia D."/>
            <person name="Grisard E.C."/>
            <person name="Hanna E.S."/>
            <person name="Jardim S.N."/>
            <person name="Laurino J."/>
            <person name="Leoi L.C.T."/>
            <person name="Lima L.F.A."/>
            <person name="Loureiro M.F."/>
            <person name="Lyra M.C.C.P."/>
            <person name="Madeira H.M.F."/>
            <person name="Manfio G.P."/>
            <person name="Maranhao A.Q."/>
            <person name="Martins W.S."/>
            <person name="di Mauro S.M.Z."/>
            <person name="de Medeiros S.R.B."/>
            <person name="Meissner R.V."/>
            <person name="Moreira M.A.M."/>
            <person name="Nascimento F.F."/>
            <person name="Nicolas M.F."/>
            <person name="Oliveira J.G."/>
            <person name="Oliveira S.C."/>
            <person name="Paixao R.F.C."/>
            <person name="Parente J.A."/>
            <person name="Pedrosa F.O."/>
            <person name="Pena S.D.J."/>
            <person name="Pereira J.O."/>
            <person name="Pereira M."/>
            <person name="Pinto L.S.R.C."/>
            <person name="Pinto L.S."/>
            <person name="Porto J.I.R."/>
            <person name="Potrich D.P."/>
            <person name="Ramalho-Neto C.E."/>
            <person name="Reis A.M.M."/>
            <person name="Rigo L.U."/>
            <person name="Rondinelli E."/>
            <person name="Santos E.B.P."/>
            <person name="Santos F.R."/>
            <person name="Schneider M.P.C."/>
            <person name="Seuanez H.N."/>
            <person name="Silva A.M.R."/>
            <person name="da Silva A.L.C."/>
            <person name="Silva D.W."/>
            <person name="Silva R."/>
            <person name="Simoes I.C."/>
            <person name="Simon D."/>
            <person name="Soares C.M.A."/>
            <person name="Soares R.B.A."/>
            <person name="Souza E.M."/>
            <person name="Souza K.R.L."/>
            <person name="Souza R.C."/>
            <person name="Steffens M.B.R."/>
            <person name="Steindel M."/>
            <person name="Teixeira S.R."/>
            <person name="Urmenyi T."/>
            <person name="Vettore A."/>
            <person name="Wassem R."/>
            <person name="Zaha A."/>
            <person name="Simpson A.J.G."/>
        </authorList>
    </citation>
    <scope>NUCLEOTIDE SEQUENCE [LARGE SCALE GENOMIC DNA]</scope>
    <source>
        <strain>ATCC 12472 / DSM 30191 / JCM 1249 / CCUG 213 / NBRC 12614 / NCIMB 9131 / NCTC 9757 / MK</strain>
    </source>
</reference>